<comment type="function">
    <text evidence="1">Part of a sulfur-relay system required for 2-thiolation of 5-methylaminomethyl-2-thiouridine (mnm(5)s(2)U) at tRNA wobble positions. Accepts sulfur from TusA and transfers it in turn to TusE.</text>
</comment>
<comment type="subunit">
    <text evidence="1">Heterohexamer, formed by a dimer of trimers. The hexameric TusBCD complex contains 2 copies each of TusB, TusC and TusD. The TusBCD complex interacts with TusE.</text>
</comment>
<comment type="subcellular location">
    <subcellularLocation>
        <location evidence="1">Cytoplasm</location>
    </subcellularLocation>
</comment>
<comment type="similarity">
    <text evidence="1">Belongs to the DsrE/TusD family.</text>
</comment>
<proteinExistence type="inferred from homology"/>
<protein>
    <recommendedName>
        <fullName evidence="1">Sulfurtransferase TusD</fullName>
        <ecNumber evidence="1">2.8.1.-</ecNumber>
    </recommendedName>
    <alternativeName>
        <fullName evidence="1">tRNA 2-thiouridine synthesizing protein D</fullName>
    </alternativeName>
</protein>
<dbReference type="EC" id="2.8.1.-" evidence="1"/>
<dbReference type="EMBL" id="CP000886">
    <property type="protein sequence ID" value="ABX69610.1"/>
    <property type="molecule type" value="Genomic_DNA"/>
</dbReference>
<dbReference type="RefSeq" id="WP_001268010.1">
    <property type="nucleotide sequence ID" value="NC_010102.1"/>
</dbReference>
<dbReference type="SMR" id="A9MT10"/>
<dbReference type="KEGG" id="spq:SPAB_04293"/>
<dbReference type="PATRIC" id="fig|1016998.12.peg.4040"/>
<dbReference type="HOGENOM" id="CLU_132095_0_0_6"/>
<dbReference type="BioCyc" id="SENT1016998:SPAB_RS17490-MONOMER"/>
<dbReference type="Proteomes" id="UP000008556">
    <property type="component" value="Chromosome"/>
</dbReference>
<dbReference type="GO" id="GO:1990228">
    <property type="term" value="C:sulfurtransferase complex"/>
    <property type="evidence" value="ECO:0007669"/>
    <property type="project" value="TreeGrafter"/>
</dbReference>
<dbReference type="GO" id="GO:0097163">
    <property type="term" value="F:sulfur carrier activity"/>
    <property type="evidence" value="ECO:0007669"/>
    <property type="project" value="TreeGrafter"/>
</dbReference>
<dbReference type="GO" id="GO:0016783">
    <property type="term" value="F:sulfurtransferase activity"/>
    <property type="evidence" value="ECO:0007669"/>
    <property type="project" value="UniProtKB-UniRule"/>
</dbReference>
<dbReference type="GO" id="GO:0002143">
    <property type="term" value="P:tRNA wobble position uridine thiolation"/>
    <property type="evidence" value="ECO:0007669"/>
    <property type="project" value="TreeGrafter"/>
</dbReference>
<dbReference type="FunFam" id="3.40.1260.10:FF:000001">
    <property type="entry name" value="Sulfurtransferase TusD"/>
    <property type="match status" value="1"/>
</dbReference>
<dbReference type="Gene3D" id="3.40.1260.10">
    <property type="entry name" value="DsrEFH-like"/>
    <property type="match status" value="1"/>
</dbReference>
<dbReference type="HAMAP" id="MF_00390">
    <property type="entry name" value="Thiourid_synth_D"/>
    <property type="match status" value="1"/>
</dbReference>
<dbReference type="InterPro" id="IPR027396">
    <property type="entry name" value="DsrEFH-like"/>
</dbReference>
<dbReference type="InterPro" id="IPR003787">
    <property type="entry name" value="Sulphur_relay_DsrE/F-like"/>
</dbReference>
<dbReference type="InterPro" id="IPR017463">
    <property type="entry name" value="Sulphur_relay_TusD/DsrE"/>
</dbReference>
<dbReference type="NCBIfam" id="NF001237">
    <property type="entry name" value="PRK00207.1"/>
    <property type="match status" value="1"/>
</dbReference>
<dbReference type="NCBIfam" id="TIGR03012">
    <property type="entry name" value="sulf_tusD_dsrE"/>
    <property type="match status" value="1"/>
</dbReference>
<dbReference type="PANTHER" id="PTHR34874">
    <property type="entry name" value="PROTEIN YCHN"/>
    <property type="match status" value="1"/>
</dbReference>
<dbReference type="PANTHER" id="PTHR34874:SF3">
    <property type="entry name" value="SULFURTRANSFERASE TUSD"/>
    <property type="match status" value="1"/>
</dbReference>
<dbReference type="Pfam" id="PF02635">
    <property type="entry name" value="DsrE"/>
    <property type="match status" value="1"/>
</dbReference>
<dbReference type="SUPFAM" id="SSF75169">
    <property type="entry name" value="DsrEFH-like"/>
    <property type="match status" value="1"/>
</dbReference>
<keyword id="KW-0963">Cytoplasm</keyword>
<keyword id="KW-0808">Transferase</keyword>
<keyword id="KW-0819">tRNA processing</keyword>
<evidence type="ECO:0000255" key="1">
    <source>
        <dbReference type="HAMAP-Rule" id="MF_00390"/>
    </source>
</evidence>
<name>TUSD_SALPB</name>
<gene>
    <name evidence="1" type="primary">tusD</name>
    <name type="ordered locus">SPAB_04293</name>
</gene>
<reference key="1">
    <citation type="submission" date="2007-11" db="EMBL/GenBank/DDBJ databases">
        <authorList>
            <consortium name="The Salmonella enterica serovar Paratyphi B Genome Sequencing Project"/>
            <person name="McClelland M."/>
            <person name="Sanderson E.K."/>
            <person name="Porwollik S."/>
            <person name="Spieth J."/>
            <person name="Clifton W.S."/>
            <person name="Fulton R."/>
            <person name="Cordes M."/>
            <person name="Wollam A."/>
            <person name="Shah N."/>
            <person name="Pepin K."/>
            <person name="Bhonagiri V."/>
            <person name="Nash W."/>
            <person name="Johnson M."/>
            <person name="Thiruvilangam P."/>
            <person name="Wilson R."/>
        </authorList>
    </citation>
    <scope>NUCLEOTIDE SEQUENCE [LARGE SCALE GENOMIC DNA]</scope>
    <source>
        <strain>ATCC BAA-1250 / SPB7</strain>
    </source>
</reference>
<feature type="chain" id="PRO_1000080236" description="Sulfurtransferase TusD">
    <location>
        <begin position="1"/>
        <end position="128"/>
    </location>
</feature>
<feature type="active site" description="Cysteine persulfide intermediate" evidence="1">
    <location>
        <position position="78"/>
    </location>
</feature>
<sequence>MRYAIMVTGPAYGTQQASSALQFAHALLNEGHELASVFFYREGVYNANLLTSPASDEYDLVRAWQKLNTQHGVALNICVAAALRRGIIDETEAGRLALPSANLQPGFTLSGLGALAEASLTCDRVVQF</sequence>
<organism>
    <name type="scientific">Salmonella paratyphi B (strain ATCC BAA-1250 / SPB7)</name>
    <dbReference type="NCBI Taxonomy" id="1016998"/>
    <lineage>
        <taxon>Bacteria</taxon>
        <taxon>Pseudomonadati</taxon>
        <taxon>Pseudomonadota</taxon>
        <taxon>Gammaproteobacteria</taxon>
        <taxon>Enterobacterales</taxon>
        <taxon>Enterobacteriaceae</taxon>
        <taxon>Salmonella</taxon>
    </lineage>
</organism>
<accession>A9MT10</accession>